<sequence length="298" mass="33701">MTKQTEYKRKPEWLKIKLNTNENYTGLKKMMRSKNLHTVCEEAKCPNIHECWAVRKTATFMILGAVCTRACRFCAVKTGLPTELDLQEPERVADSVVQMGLKHVVITAVARDDLKDGGAAVFAETVRAVRRKNPFTSIEVLPSDMGGVEENLKMLMDAKPDILNHNIETVRRLSNRVRARAKYDRSLEFLRRAKEMQPDIPTKSSIMVGLGETREDLIEAMDDLRANNVDILTLGQYLQPSKKHLPVLKYYPPAEFAELKEIALSKGFSHCEAGPLVRSSYHADEQVRSAKEKTAEAK</sequence>
<organism>
    <name type="scientific">Bacillus anthracis</name>
    <dbReference type="NCBI Taxonomy" id="1392"/>
    <lineage>
        <taxon>Bacteria</taxon>
        <taxon>Bacillati</taxon>
        <taxon>Bacillota</taxon>
        <taxon>Bacilli</taxon>
        <taxon>Bacillales</taxon>
        <taxon>Bacillaceae</taxon>
        <taxon>Bacillus</taxon>
        <taxon>Bacillus cereus group</taxon>
    </lineage>
</organism>
<proteinExistence type="inferred from homology"/>
<keyword id="KW-0004">4Fe-4S</keyword>
<keyword id="KW-0963">Cytoplasm</keyword>
<keyword id="KW-0408">Iron</keyword>
<keyword id="KW-0411">Iron-sulfur</keyword>
<keyword id="KW-0479">Metal-binding</keyword>
<keyword id="KW-1185">Reference proteome</keyword>
<keyword id="KW-0949">S-adenosyl-L-methionine</keyword>
<keyword id="KW-0808">Transferase</keyword>
<comment type="function">
    <text evidence="1">Catalyzes the radical-mediated insertion of two sulfur atoms into the C-6 and C-8 positions of the octanoyl moiety bound to the lipoyl domains of lipoate-dependent enzymes, thereby converting the octanoylated domains into lipoylated derivatives.</text>
</comment>
<comment type="catalytic activity">
    <reaction evidence="1">
        <text>[[Fe-S] cluster scaffold protein carrying a second [4Fe-4S](2+) cluster] + N(6)-octanoyl-L-lysyl-[protein] + 2 oxidized [2Fe-2S]-[ferredoxin] + 2 S-adenosyl-L-methionine + 4 H(+) = [[Fe-S] cluster scaffold protein] + N(6)-[(R)-dihydrolipoyl]-L-lysyl-[protein] + 4 Fe(3+) + 2 hydrogen sulfide + 2 5'-deoxyadenosine + 2 L-methionine + 2 reduced [2Fe-2S]-[ferredoxin]</text>
        <dbReference type="Rhea" id="RHEA:16585"/>
        <dbReference type="Rhea" id="RHEA-COMP:9928"/>
        <dbReference type="Rhea" id="RHEA-COMP:10000"/>
        <dbReference type="Rhea" id="RHEA-COMP:10001"/>
        <dbReference type="Rhea" id="RHEA-COMP:10475"/>
        <dbReference type="Rhea" id="RHEA-COMP:14568"/>
        <dbReference type="Rhea" id="RHEA-COMP:14569"/>
        <dbReference type="ChEBI" id="CHEBI:15378"/>
        <dbReference type="ChEBI" id="CHEBI:17319"/>
        <dbReference type="ChEBI" id="CHEBI:29034"/>
        <dbReference type="ChEBI" id="CHEBI:29919"/>
        <dbReference type="ChEBI" id="CHEBI:33722"/>
        <dbReference type="ChEBI" id="CHEBI:33737"/>
        <dbReference type="ChEBI" id="CHEBI:33738"/>
        <dbReference type="ChEBI" id="CHEBI:57844"/>
        <dbReference type="ChEBI" id="CHEBI:59789"/>
        <dbReference type="ChEBI" id="CHEBI:78809"/>
        <dbReference type="ChEBI" id="CHEBI:83100"/>
        <dbReference type="EC" id="2.8.1.8"/>
    </reaction>
</comment>
<comment type="cofactor">
    <cofactor evidence="1">
        <name>[4Fe-4S] cluster</name>
        <dbReference type="ChEBI" id="CHEBI:49883"/>
    </cofactor>
    <text evidence="1">Binds 2 [4Fe-4S] clusters per subunit. One cluster is coordinated with 3 cysteines and an exchangeable S-adenosyl-L-methionine.</text>
</comment>
<comment type="pathway">
    <text evidence="1">Protein modification; protein lipoylation via endogenous pathway; protein N(6)-(lipoyl)lysine from octanoyl-[acyl-carrier-protein].</text>
</comment>
<comment type="subcellular location">
    <subcellularLocation>
        <location evidence="1">Cytoplasm</location>
    </subcellularLocation>
</comment>
<comment type="similarity">
    <text evidence="1">Belongs to the radical SAM superfamily. Lipoyl synthase family.</text>
</comment>
<evidence type="ECO:0000255" key="1">
    <source>
        <dbReference type="HAMAP-Rule" id="MF_00206"/>
    </source>
</evidence>
<evidence type="ECO:0000255" key="2">
    <source>
        <dbReference type="PROSITE-ProRule" id="PRU01266"/>
    </source>
</evidence>
<accession>Q81XM8</accession>
<accession>Q6HRF5</accession>
<accession>Q6KKS2</accession>
<reference key="1">
    <citation type="journal article" date="2003" name="Nature">
        <title>The genome sequence of Bacillus anthracis Ames and comparison to closely related bacteria.</title>
        <authorList>
            <person name="Read T.D."/>
            <person name="Peterson S.N."/>
            <person name="Tourasse N.J."/>
            <person name="Baillie L.W."/>
            <person name="Paulsen I.T."/>
            <person name="Nelson K.E."/>
            <person name="Tettelin H."/>
            <person name="Fouts D.E."/>
            <person name="Eisen J.A."/>
            <person name="Gill S.R."/>
            <person name="Holtzapple E.K."/>
            <person name="Okstad O.A."/>
            <person name="Helgason E."/>
            <person name="Rilstone J."/>
            <person name="Wu M."/>
            <person name="Kolonay J.F."/>
            <person name="Beanan M.J."/>
            <person name="Dodson R.J."/>
            <person name="Brinkac L.M."/>
            <person name="Gwinn M.L."/>
            <person name="DeBoy R.T."/>
            <person name="Madpu R."/>
            <person name="Daugherty S.C."/>
            <person name="Durkin A.S."/>
            <person name="Haft D.H."/>
            <person name="Nelson W.C."/>
            <person name="Peterson J.D."/>
            <person name="Pop M."/>
            <person name="Khouri H.M."/>
            <person name="Radune D."/>
            <person name="Benton J.L."/>
            <person name="Mahamoud Y."/>
            <person name="Jiang L."/>
            <person name="Hance I.R."/>
            <person name="Weidman J.F."/>
            <person name="Berry K.J."/>
            <person name="Plaut R.D."/>
            <person name="Wolf A.M."/>
            <person name="Watkins K.L."/>
            <person name="Nierman W.C."/>
            <person name="Hazen A."/>
            <person name="Cline R.T."/>
            <person name="Redmond C."/>
            <person name="Thwaite J.E."/>
            <person name="White O."/>
            <person name="Salzberg S.L."/>
            <person name="Thomason B."/>
            <person name="Friedlander A.M."/>
            <person name="Koehler T.M."/>
            <person name="Hanna P.C."/>
            <person name="Kolstoe A.-B."/>
            <person name="Fraser C.M."/>
        </authorList>
    </citation>
    <scope>NUCLEOTIDE SEQUENCE [LARGE SCALE GENOMIC DNA]</scope>
    <source>
        <strain>Ames / isolate Porton</strain>
    </source>
</reference>
<reference key="2">
    <citation type="journal article" date="2009" name="J. Bacteriol.">
        <title>The complete genome sequence of Bacillus anthracis Ames 'Ancestor'.</title>
        <authorList>
            <person name="Ravel J."/>
            <person name="Jiang L."/>
            <person name="Stanley S.T."/>
            <person name="Wilson M.R."/>
            <person name="Decker R.S."/>
            <person name="Read T.D."/>
            <person name="Worsham P."/>
            <person name="Keim P.S."/>
            <person name="Salzberg S.L."/>
            <person name="Fraser-Liggett C.M."/>
            <person name="Rasko D.A."/>
        </authorList>
    </citation>
    <scope>NUCLEOTIDE SEQUENCE [LARGE SCALE GENOMIC DNA]</scope>
    <source>
        <strain>Ames ancestor</strain>
    </source>
</reference>
<reference key="3">
    <citation type="submission" date="2004-01" db="EMBL/GenBank/DDBJ databases">
        <title>Complete genome sequence of Bacillus anthracis Sterne.</title>
        <authorList>
            <person name="Brettin T.S."/>
            <person name="Bruce D."/>
            <person name="Challacombe J.F."/>
            <person name="Gilna P."/>
            <person name="Han C."/>
            <person name="Hill K."/>
            <person name="Hitchcock P."/>
            <person name="Jackson P."/>
            <person name="Keim P."/>
            <person name="Longmire J."/>
            <person name="Lucas S."/>
            <person name="Okinaka R."/>
            <person name="Richardson P."/>
            <person name="Rubin E."/>
            <person name="Tice H."/>
        </authorList>
    </citation>
    <scope>NUCLEOTIDE SEQUENCE [LARGE SCALE GENOMIC DNA]</scope>
    <source>
        <strain>Sterne</strain>
    </source>
</reference>
<protein>
    <recommendedName>
        <fullName evidence="1">Lipoyl synthase</fullName>
        <ecNumber evidence="1">2.8.1.8</ecNumber>
    </recommendedName>
    <alternativeName>
        <fullName evidence="1">Lip-syn</fullName>
        <shortName evidence="1">LS</shortName>
    </alternativeName>
    <alternativeName>
        <fullName evidence="1">Lipoate synthase</fullName>
    </alternativeName>
    <alternativeName>
        <fullName evidence="1">Lipoic acid synthase</fullName>
    </alternativeName>
    <alternativeName>
        <fullName evidence="1">Sulfur insertion protein LipA</fullName>
    </alternativeName>
</protein>
<feature type="chain" id="PRO_0000102285" description="Lipoyl synthase">
    <location>
        <begin position="1"/>
        <end position="298"/>
    </location>
</feature>
<feature type="domain" description="Radical SAM core" evidence="2">
    <location>
        <begin position="53"/>
        <end position="269"/>
    </location>
</feature>
<feature type="binding site" evidence="1">
    <location>
        <position position="40"/>
    </location>
    <ligand>
        <name>[4Fe-4S] cluster</name>
        <dbReference type="ChEBI" id="CHEBI:49883"/>
        <label>1</label>
    </ligand>
</feature>
<feature type="binding site" evidence="1">
    <location>
        <position position="45"/>
    </location>
    <ligand>
        <name>[4Fe-4S] cluster</name>
        <dbReference type="ChEBI" id="CHEBI:49883"/>
        <label>1</label>
    </ligand>
</feature>
<feature type="binding site" evidence="1">
    <location>
        <position position="51"/>
    </location>
    <ligand>
        <name>[4Fe-4S] cluster</name>
        <dbReference type="ChEBI" id="CHEBI:49883"/>
        <label>1</label>
    </ligand>
</feature>
<feature type="binding site" evidence="1">
    <location>
        <position position="67"/>
    </location>
    <ligand>
        <name>[4Fe-4S] cluster</name>
        <dbReference type="ChEBI" id="CHEBI:49883"/>
        <label>2</label>
        <note>4Fe-4S-S-AdoMet</note>
    </ligand>
</feature>
<feature type="binding site" evidence="1">
    <location>
        <position position="71"/>
    </location>
    <ligand>
        <name>[4Fe-4S] cluster</name>
        <dbReference type="ChEBI" id="CHEBI:49883"/>
        <label>2</label>
        <note>4Fe-4S-S-AdoMet</note>
    </ligand>
</feature>
<feature type="binding site" evidence="1">
    <location>
        <position position="74"/>
    </location>
    <ligand>
        <name>[4Fe-4S] cluster</name>
        <dbReference type="ChEBI" id="CHEBI:49883"/>
        <label>2</label>
        <note>4Fe-4S-S-AdoMet</note>
    </ligand>
</feature>
<feature type="binding site" evidence="1">
    <location>
        <position position="280"/>
    </location>
    <ligand>
        <name>[4Fe-4S] cluster</name>
        <dbReference type="ChEBI" id="CHEBI:49883"/>
        <label>1</label>
    </ligand>
</feature>
<gene>
    <name evidence="1" type="primary">lipA</name>
    <name type="ordered locus">BA_5205</name>
    <name type="ordered locus">GBAA_5205</name>
    <name type="ordered locus">BAS4840</name>
</gene>
<name>LIPA_BACAN</name>
<dbReference type="EC" id="2.8.1.8" evidence="1"/>
<dbReference type="EMBL" id="AE016879">
    <property type="protein sequence ID" value="AAP28874.1"/>
    <property type="molecule type" value="Genomic_DNA"/>
</dbReference>
<dbReference type="EMBL" id="AE017334">
    <property type="protein sequence ID" value="AAT34336.1"/>
    <property type="molecule type" value="Genomic_DNA"/>
</dbReference>
<dbReference type="EMBL" id="AE017225">
    <property type="protein sequence ID" value="AAT57133.1"/>
    <property type="molecule type" value="Genomic_DNA"/>
</dbReference>
<dbReference type="RefSeq" id="NP_847388.1">
    <property type="nucleotide sequence ID" value="NC_003997.3"/>
</dbReference>
<dbReference type="RefSeq" id="WP_000166375.1">
    <property type="nucleotide sequence ID" value="NZ_WXXJ01000017.1"/>
</dbReference>
<dbReference type="RefSeq" id="YP_031083.1">
    <property type="nucleotide sequence ID" value="NC_005945.1"/>
</dbReference>
<dbReference type="SMR" id="Q81XM8"/>
<dbReference type="STRING" id="261594.GBAA_5205"/>
<dbReference type="DNASU" id="1084615"/>
<dbReference type="GeneID" id="93006112"/>
<dbReference type="KEGG" id="ban:BA_5205"/>
<dbReference type="KEGG" id="bar:GBAA_5205"/>
<dbReference type="KEGG" id="bat:BAS4840"/>
<dbReference type="PATRIC" id="fig|198094.11.peg.5167"/>
<dbReference type="eggNOG" id="COG0320">
    <property type="taxonomic scope" value="Bacteria"/>
</dbReference>
<dbReference type="HOGENOM" id="CLU_033144_2_1_9"/>
<dbReference type="OMA" id="PYCDIDF"/>
<dbReference type="OrthoDB" id="9787898at2"/>
<dbReference type="Proteomes" id="UP000000427">
    <property type="component" value="Chromosome"/>
</dbReference>
<dbReference type="Proteomes" id="UP000000594">
    <property type="component" value="Chromosome"/>
</dbReference>
<dbReference type="GO" id="GO:0005737">
    <property type="term" value="C:cytoplasm"/>
    <property type="evidence" value="ECO:0007669"/>
    <property type="project" value="UniProtKB-SubCell"/>
</dbReference>
<dbReference type="GO" id="GO:0051539">
    <property type="term" value="F:4 iron, 4 sulfur cluster binding"/>
    <property type="evidence" value="ECO:0007669"/>
    <property type="project" value="UniProtKB-UniRule"/>
</dbReference>
<dbReference type="GO" id="GO:0016992">
    <property type="term" value="F:lipoate synthase activity"/>
    <property type="evidence" value="ECO:0007669"/>
    <property type="project" value="UniProtKB-UniRule"/>
</dbReference>
<dbReference type="GO" id="GO:0046872">
    <property type="term" value="F:metal ion binding"/>
    <property type="evidence" value="ECO:0007669"/>
    <property type="project" value="UniProtKB-KW"/>
</dbReference>
<dbReference type="CDD" id="cd01335">
    <property type="entry name" value="Radical_SAM"/>
    <property type="match status" value="1"/>
</dbReference>
<dbReference type="FunFam" id="3.20.20.70:FF:000040">
    <property type="entry name" value="Lipoyl synthase"/>
    <property type="match status" value="1"/>
</dbReference>
<dbReference type="Gene3D" id="3.20.20.70">
    <property type="entry name" value="Aldolase class I"/>
    <property type="match status" value="1"/>
</dbReference>
<dbReference type="HAMAP" id="MF_00206">
    <property type="entry name" value="Lipoyl_synth"/>
    <property type="match status" value="1"/>
</dbReference>
<dbReference type="InterPro" id="IPR013785">
    <property type="entry name" value="Aldolase_TIM"/>
</dbReference>
<dbReference type="InterPro" id="IPR006638">
    <property type="entry name" value="Elp3/MiaA/NifB-like_rSAM"/>
</dbReference>
<dbReference type="InterPro" id="IPR031691">
    <property type="entry name" value="LIAS_N"/>
</dbReference>
<dbReference type="InterPro" id="IPR003698">
    <property type="entry name" value="Lipoyl_synth"/>
</dbReference>
<dbReference type="InterPro" id="IPR007197">
    <property type="entry name" value="rSAM"/>
</dbReference>
<dbReference type="NCBIfam" id="TIGR00510">
    <property type="entry name" value="lipA"/>
    <property type="match status" value="1"/>
</dbReference>
<dbReference type="NCBIfam" id="NF004019">
    <property type="entry name" value="PRK05481.1"/>
    <property type="match status" value="1"/>
</dbReference>
<dbReference type="NCBIfam" id="NF009544">
    <property type="entry name" value="PRK12928.1"/>
    <property type="match status" value="1"/>
</dbReference>
<dbReference type="PANTHER" id="PTHR10949">
    <property type="entry name" value="LIPOYL SYNTHASE"/>
    <property type="match status" value="1"/>
</dbReference>
<dbReference type="PANTHER" id="PTHR10949:SF0">
    <property type="entry name" value="LIPOYL SYNTHASE, MITOCHONDRIAL"/>
    <property type="match status" value="1"/>
</dbReference>
<dbReference type="Pfam" id="PF16881">
    <property type="entry name" value="LIAS_N"/>
    <property type="match status" value="1"/>
</dbReference>
<dbReference type="Pfam" id="PF04055">
    <property type="entry name" value="Radical_SAM"/>
    <property type="match status" value="1"/>
</dbReference>
<dbReference type="PIRSF" id="PIRSF005963">
    <property type="entry name" value="Lipoyl_synth"/>
    <property type="match status" value="1"/>
</dbReference>
<dbReference type="SFLD" id="SFLDF00271">
    <property type="entry name" value="lipoyl_synthase"/>
    <property type="match status" value="1"/>
</dbReference>
<dbReference type="SFLD" id="SFLDG01058">
    <property type="entry name" value="lipoyl_synthase_like"/>
    <property type="match status" value="1"/>
</dbReference>
<dbReference type="SMART" id="SM00729">
    <property type="entry name" value="Elp3"/>
    <property type="match status" value="1"/>
</dbReference>
<dbReference type="SUPFAM" id="SSF102114">
    <property type="entry name" value="Radical SAM enzymes"/>
    <property type="match status" value="1"/>
</dbReference>
<dbReference type="PROSITE" id="PS51918">
    <property type="entry name" value="RADICAL_SAM"/>
    <property type="match status" value="1"/>
</dbReference>